<comment type="function">
    <text evidence="2">Proton pump that utilizes the energy of pyrophosphate hydrolysis as the driving force for proton movement across the membrane. Generates a proton motive force.</text>
</comment>
<comment type="catalytic activity">
    <reaction evidence="2">
        <text>diphosphate + H2O + H(+)(in) = 2 phosphate + 2 H(+)(out)</text>
        <dbReference type="Rhea" id="RHEA:13973"/>
        <dbReference type="ChEBI" id="CHEBI:15377"/>
        <dbReference type="ChEBI" id="CHEBI:15378"/>
        <dbReference type="ChEBI" id="CHEBI:33019"/>
        <dbReference type="ChEBI" id="CHEBI:43474"/>
        <dbReference type="EC" id="7.1.3.1"/>
    </reaction>
</comment>
<comment type="cofactor">
    <cofactor evidence="2">
        <name>Mg(2+)</name>
        <dbReference type="ChEBI" id="CHEBI:18420"/>
    </cofactor>
</comment>
<comment type="subunit">
    <text evidence="2">Homodimer.</text>
</comment>
<comment type="subcellular location">
    <subcellularLocation>
        <location evidence="2">Cell inner membrane</location>
        <topology evidence="2">Multi-pass membrane protein</topology>
    </subcellularLocation>
</comment>
<comment type="similarity">
    <text evidence="2">Belongs to the H(+)-translocating pyrophosphatase (TC 3.A.10) family. K(+)-insensitive subfamily.</text>
</comment>
<sequence>MAGIYLFVVAAALAALGYGALTIKTIMAADAGTARMQEISGAVQEGASAFLNRQYKTIAVVGAVVFVILTALLGISVGFGFLIGAVCSGIAGYVGMYISVRANVRVAAGAQQGLARGLELAFQSGAVTGMLVAGLALLSVAFYYILLVGIGATGRALIDPLVALGFGASLISIFARLGGGIFTKGADVGADLVGKVEAGIPEDDPRNPAVIADNVGDNVGDCAGMAADLFETYAVTVVATMVLASIFFAGVPAMTSMMAYPLAIGGVCILASILGTKFVKLGPKNNIMGALYRGFLVSAGASFVGIILATAIVPGFGDIQGANGVLYSGFDLFLCAVIGLLVTGLLIWVTEYYTGTNFRPVRSVAKASTTGHGTNVIQGLAISMEATALPALIICAAIITTYQLSGLFGIAITVTSMLALAGMVVALDAYGPVTDNAGGIAEMANLPEDVRKTTDALDAVGNTTKAVTKGYAIGSAGLGALVLFAAYTEDLAFFKANVDAYPAFAGVDVNFSLSSPYVVVGLFIGGLLPYLFGSMGMTAVGRAAGSVVEEVRRQFREIPGIMEGTAKPEYGRCVDMLTKAAIKEMIIPSLLPVLAPIVLYFVILGIADKSAAFSALGAMLLGVIVTGLFVAISMTAGGGAWDNAKKYIEDGHYGGKGSEAHKAAVTGDTVGDPYKDTAGPAVNPMIKITNIVALLLLAVLAH</sequence>
<evidence type="ECO:0000250" key="1"/>
<evidence type="ECO:0000255" key="2">
    <source>
        <dbReference type="HAMAP-Rule" id="MF_01129"/>
    </source>
</evidence>
<evidence type="ECO:0000269" key="3">
    <source>
    </source>
</evidence>
<evidence type="ECO:0000305" key="4"/>
<organism>
    <name type="scientific">Rhodospirillum rubrum (strain ATCC 11170 / ATH 1.1.1 / DSM 467 / LMG 4362 / NCIMB 8255 / S1)</name>
    <dbReference type="NCBI Taxonomy" id="269796"/>
    <lineage>
        <taxon>Bacteria</taxon>
        <taxon>Pseudomonadati</taxon>
        <taxon>Pseudomonadota</taxon>
        <taxon>Alphaproteobacteria</taxon>
        <taxon>Rhodospirillales</taxon>
        <taxon>Rhodospirillaceae</taxon>
        <taxon>Rhodospirillum</taxon>
    </lineage>
</organism>
<gene>
    <name evidence="2" type="primary">hppA</name>
    <name type="synonym">rrpP</name>
    <name type="synonym">vppA</name>
    <name type="ordered locus">Rru_A1818</name>
</gene>
<reference key="1">
    <citation type="journal article" date="1998" name="Biochim. Biophys. Acta">
        <title>A pyrophosphate synthase gene: molecular cloning and sequencing of the cDNA encoding the inorganic pyrophosphate synthase from Rhodospirillum rubrum.</title>
        <authorList>
            <person name="Baltscheffsky M."/>
            <person name="Nadanaciva S."/>
            <person name="Schultz A."/>
        </authorList>
    </citation>
    <scope>NUCLEOTIDE SEQUENCE [GENOMIC DNA]</scope>
</reference>
<reference key="2">
    <citation type="journal article" date="2011" name="Stand. Genomic Sci.">
        <title>Complete genome sequence of Rhodospirillum rubrum type strain (S1).</title>
        <authorList>
            <person name="Munk A.C."/>
            <person name="Copeland A."/>
            <person name="Lucas S."/>
            <person name="Lapidus A."/>
            <person name="Del Rio T.G."/>
            <person name="Barry K."/>
            <person name="Detter J.C."/>
            <person name="Hammon N."/>
            <person name="Israni S."/>
            <person name="Pitluck S."/>
            <person name="Brettin T."/>
            <person name="Bruce D."/>
            <person name="Han C."/>
            <person name="Tapia R."/>
            <person name="Gilna P."/>
            <person name="Schmutz J."/>
            <person name="Larimer F."/>
            <person name="Land M."/>
            <person name="Kyrpides N.C."/>
            <person name="Mavromatis K."/>
            <person name="Richardson P."/>
            <person name="Rohde M."/>
            <person name="Goeker M."/>
            <person name="Klenk H.P."/>
            <person name="Zhang Y."/>
            <person name="Roberts G.P."/>
            <person name="Reslewic S."/>
            <person name="Schwartz D.C."/>
        </authorList>
    </citation>
    <scope>NUCLEOTIDE SEQUENCE [LARGE SCALE GENOMIC DNA]</scope>
    <source>
        <strain>ATCC 11170 / ATH 1.1.1 / DSM 467 / LMG 4362 / NCIMB 8255 / S1</strain>
    </source>
</reference>
<reference key="3">
    <citation type="journal article" date="2004" name="J. Bacteriol.">
        <title>Differential regulation of soluble and membrane-bound inorganic pyrophosphatases in the photosynthetic bacterium Rhodospirillum rubrum provides insights into pyrophosphate-based stress bioenergetics.</title>
        <authorList>
            <person name="Lopez-Marques R.L."/>
            <person name="Perez-Castineira J.R."/>
            <person name="Losada M."/>
            <person name="Serrano A."/>
        </authorList>
    </citation>
    <scope>NUCLEOTIDE SEQUENCE [GENOMIC DNA] OF 1-81</scope>
</reference>
<reference key="4">
    <citation type="journal article" date="2002" name="J. Biol. Chem.">
        <title>H+-pyrophosphatase of Rhodospirillum rubrum. High yield expression in Escherichia coli and identification of the Cys residues responsible for inactivation my mersalyl.</title>
        <authorList>
            <person name="Belogurov G.A."/>
            <person name="Turkina M.V."/>
            <person name="Penttinen A."/>
            <person name="Huopalahti S."/>
            <person name="Baykov A.A."/>
            <person name="Lahti R."/>
        </authorList>
    </citation>
    <scope>CHARACTERIZATION</scope>
    <scope>MUTAGENESIS OF GLY-185; CYS-222 AND CYS-573</scope>
</reference>
<feature type="chain" id="PRO_0000217030" description="K(+)-insensitive pyrophosphate-energized proton pump">
    <location>
        <begin position="1"/>
        <end position="702"/>
    </location>
</feature>
<feature type="transmembrane region" description="Helical" evidence="2">
    <location>
        <begin position="3"/>
        <end position="23"/>
    </location>
</feature>
<feature type="transmembrane region" description="Helical" evidence="2">
    <location>
        <begin position="63"/>
        <end position="83"/>
    </location>
</feature>
<feature type="transmembrane region" description="Helical" evidence="2">
    <location>
        <begin position="130"/>
        <end position="150"/>
    </location>
</feature>
<feature type="transmembrane region" description="Helical" evidence="2">
    <location>
        <begin position="162"/>
        <end position="182"/>
    </location>
</feature>
<feature type="transmembrane region" description="Helical" evidence="2">
    <location>
        <begin position="234"/>
        <end position="254"/>
    </location>
</feature>
<feature type="transmembrane region" description="Helical" evidence="2">
    <location>
        <begin position="255"/>
        <end position="275"/>
    </location>
</feature>
<feature type="transmembrane region" description="Helical" evidence="2">
    <location>
        <begin position="294"/>
        <end position="314"/>
    </location>
</feature>
<feature type="transmembrane region" description="Helical" evidence="2">
    <location>
        <begin position="329"/>
        <end position="349"/>
    </location>
</feature>
<feature type="transmembrane region" description="Helical" evidence="2">
    <location>
        <begin position="379"/>
        <end position="399"/>
    </location>
</feature>
<feature type="transmembrane region" description="Helical" evidence="2">
    <location>
        <begin position="407"/>
        <end position="427"/>
    </location>
</feature>
<feature type="transmembrane region" description="Helical" evidence="2">
    <location>
        <begin position="466"/>
        <end position="486"/>
    </location>
</feature>
<feature type="transmembrane region" description="Helical" evidence="2">
    <location>
        <begin position="517"/>
        <end position="537"/>
    </location>
</feature>
<feature type="transmembrane region" description="Helical" evidence="2">
    <location>
        <begin position="586"/>
        <end position="606"/>
    </location>
</feature>
<feature type="transmembrane region" description="Helical" evidence="2">
    <location>
        <begin position="612"/>
        <end position="632"/>
    </location>
</feature>
<feature type="binding site" evidence="1">
    <location>
        <position position="184"/>
    </location>
    <ligand>
        <name>substrate</name>
    </ligand>
</feature>
<feature type="binding site" evidence="1">
    <location>
        <position position="187"/>
    </location>
    <ligand>
        <name>Mg(2+)</name>
        <dbReference type="ChEBI" id="CHEBI:18420"/>
        <label>1</label>
    </ligand>
</feature>
<feature type="binding site" evidence="1">
    <location>
        <position position="191"/>
    </location>
    <ligand>
        <name>Mg(2+)</name>
        <dbReference type="ChEBI" id="CHEBI:18420"/>
        <label>1</label>
    </ligand>
</feature>
<feature type="binding site" evidence="1">
    <location>
        <position position="214"/>
    </location>
    <ligand>
        <name>Mg(2+)</name>
        <dbReference type="ChEBI" id="CHEBI:18420"/>
        <label>2</label>
    </ligand>
</feature>
<feature type="binding site" evidence="1">
    <location>
        <position position="217"/>
    </location>
    <ligand>
        <name>Mg(2+)</name>
        <dbReference type="ChEBI" id="CHEBI:18420"/>
        <label>2</label>
    </ligand>
</feature>
<feature type="binding site" evidence="1">
    <location>
        <position position="435"/>
    </location>
    <ligand>
        <name>Mg(2+)</name>
        <dbReference type="ChEBI" id="CHEBI:18420"/>
        <label>2</label>
    </ligand>
</feature>
<feature type="binding site" evidence="1">
    <location>
        <position position="642"/>
    </location>
    <ligand>
        <name>Ca(2+)</name>
        <dbReference type="ChEBI" id="CHEBI:29108"/>
    </ligand>
</feature>
<feature type="binding site" evidence="1">
    <location>
        <position position="668"/>
    </location>
    <ligand>
        <name>Ca(2+)</name>
        <dbReference type="ChEBI" id="CHEBI:29108"/>
    </ligand>
</feature>
<feature type="binding site" evidence="1">
    <location>
        <position position="672"/>
    </location>
    <ligand>
        <name>Ca(2+)</name>
        <dbReference type="ChEBI" id="CHEBI:29108"/>
    </ligand>
</feature>
<feature type="binding site" evidence="1">
    <location>
        <position position="675"/>
    </location>
    <ligand>
        <name>substrate</name>
    </ligand>
</feature>
<feature type="site" description="Important for ion transport" evidence="1">
    <location>
        <position position="176"/>
    </location>
</feature>
<feature type="site" description="Important for ion transport" evidence="1">
    <location>
        <position position="221"/>
    </location>
</feature>
<feature type="site" description="Important for ion transport" evidence="1">
    <location>
        <position position="228"/>
    </location>
</feature>
<feature type="site" description="Determinant of potassium independence" evidence="2">
    <location>
        <position position="465"/>
    </location>
</feature>
<feature type="site" description="Important for ion transport" evidence="1">
    <location>
        <position position="676"/>
    </location>
</feature>
<feature type="site" description="Important for ion transport" evidence="1">
    <location>
        <position position="687"/>
    </location>
</feature>
<feature type="mutagenesis site" description="No effect on activity; decreased sensitivity to the sulfhydryl modifying reagent mersalyl." evidence="3">
    <original>G</original>
    <variation>A</variation>
    <location>
        <position position="185"/>
    </location>
</feature>
<feature type="mutagenesis site" description="No effect on activity; decreased sensitivity to the sulfhydryl modifying reagent mersalyl." evidence="3">
    <original>C</original>
    <variation>V</variation>
    <location>
        <position position="222"/>
    </location>
</feature>
<feature type="mutagenesis site" description="No effect on activity; decreased sensitivity to the sulfhydryl modifying reagent mersalyl." evidence="3">
    <original>C</original>
    <variation>A</variation>
    <location>
        <position position="573"/>
    </location>
</feature>
<feature type="sequence conflict" description="In Ref. 3; CAD70568." evidence="4" ref="3">
    <original>L</original>
    <variation>V</variation>
    <location>
        <position position="72"/>
    </location>
</feature>
<feature type="sequence conflict" description="In Ref. 3; CAD70568." evidence="4" ref="3">
    <original>G</original>
    <variation>V</variation>
    <location>
        <position position="78"/>
    </location>
</feature>
<feature type="sequence conflict" description="In Ref. 1; AAC38615." evidence="4" ref="1">
    <original>G</original>
    <variation>C</variation>
    <location>
        <position position="185"/>
    </location>
</feature>
<feature type="sequence conflict" description="In Ref. 1; AAC38615." evidence="4" ref="1">
    <original>A</original>
    <variation>S</variation>
    <location>
        <position position="476"/>
    </location>
</feature>
<keyword id="KW-0106">Calcium</keyword>
<keyword id="KW-0997">Cell inner membrane</keyword>
<keyword id="KW-1003">Cell membrane</keyword>
<keyword id="KW-0375">Hydrogen ion transport</keyword>
<keyword id="KW-0406">Ion transport</keyword>
<keyword id="KW-0460">Magnesium</keyword>
<keyword id="KW-0472">Membrane</keyword>
<keyword id="KW-0479">Metal-binding</keyword>
<keyword id="KW-1185">Reference proteome</keyword>
<keyword id="KW-1278">Translocase</keyword>
<keyword id="KW-0812">Transmembrane</keyword>
<keyword id="KW-1133">Transmembrane helix</keyword>
<keyword id="KW-0813">Transport</keyword>
<accession>O68460</accession>
<accession>Q2RTC7</accession>
<dbReference type="EC" id="7.1.3.1" evidence="2"/>
<dbReference type="EMBL" id="AF044912">
    <property type="protein sequence ID" value="AAC38615.2"/>
    <property type="molecule type" value="mRNA"/>
</dbReference>
<dbReference type="EMBL" id="CP000230">
    <property type="protein sequence ID" value="ABC22618.1"/>
    <property type="molecule type" value="Genomic_DNA"/>
</dbReference>
<dbReference type="EMBL" id="AJ549291">
    <property type="protein sequence ID" value="CAD70568.1"/>
    <property type="molecule type" value="Genomic_DNA"/>
</dbReference>
<dbReference type="RefSeq" id="WP_011389571.1">
    <property type="nucleotide sequence ID" value="NC_007643.1"/>
</dbReference>
<dbReference type="RefSeq" id="YP_426905.1">
    <property type="nucleotide sequence ID" value="NC_007643.1"/>
</dbReference>
<dbReference type="SMR" id="O68460"/>
<dbReference type="STRING" id="269796.Rru_A1818"/>
<dbReference type="TCDB" id="3.A.10.2.1">
    <property type="family name" value="the h(+), na(+)-translocating pyrophosphatase (m(+)-ppase) family"/>
</dbReference>
<dbReference type="EnsemblBacteria" id="ABC22618">
    <property type="protein sequence ID" value="ABC22618"/>
    <property type="gene ID" value="Rru_A1818"/>
</dbReference>
<dbReference type="KEGG" id="rru:Rru_A1818"/>
<dbReference type="PATRIC" id="fig|269796.9.peg.1896"/>
<dbReference type="eggNOG" id="COG3808">
    <property type="taxonomic scope" value="Bacteria"/>
</dbReference>
<dbReference type="HOGENOM" id="CLU_008743_3_1_5"/>
<dbReference type="PhylomeDB" id="O68460"/>
<dbReference type="BRENDA" id="7.1.3.1">
    <property type="organism ID" value="5420"/>
</dbReference>
<dbReference type="Proteomes" id="UP000001929">
    <property type="component" value="Chromosome"/>
</dbReference>
<dbReference type="GO" id="GO:0005886">
    <property type="term" value="C:plasma membrane"/>
    <property type="evidence" value="ECO:0007669"/>
    <property type="project" value="UniProtKB-SubCell"/>
</dbReference>
<dbReference type="GO" id="GO:0009678">
    <property type="term" value="F:diphosphate hydrolysis-driven proton transmembrane transporter activity"/>
    <property type="evidence" value="ECO:0007669"/>
    <property type="project" value="UniProtKB-UniRule"/>
</dbReference>
<dbReference type="GO" id="GO:0004427">
    <property type="term" value="F:inorganic diphosphate phosphatase activity"/>
    <property type="evidence" value="ECO:0007669"/>
    <property type="project" value="UniProtKB-UniRule"/>
</dbReference>
<dbReference type="GO" id="GO:0000287">
    <property type="term" value="F:magnesium ion binding"/>
    <property type="evidence" value="ECO:0007669"/>
    <property type="project" value="UniProtKB-UniRule"/>
</dbReference>
<dbReference type="HAMAP" id="MF_01129">
    <property type="entry name" value="PPase_energized_pump"/>
    <property type="match status" value="1"/>
</dbReference>
<dbReference type="InterPro" id="IPR004131">
    <property type="entry name" value="PPase-energised_H-pump"/>
</dbReference>
<dbReference type="NCBIfam" id="NF001951">
    <property type="entry name" value="PRK00733.1-2"/>
    <property type="match status" value="1"/>
</dbReference>
<dbReference type="NCBIfam" id="NF001960">
    <property type="entry name" value="PRK00733.3-5"/>
    <property type="match status" value="1"/>
</dbReference>
<dbReference type="NCBIfam" id="TIGR01104">
    <property type="entry name" value="V_PPase"/>
    <property type="match status" value="1"/>
</dbReference>
<dbReference type="PANTHER" id="PTHR31998">
    <property type="entry name" value="K(+)-INSENSITIVE PYROPHOSPHATE-ENERGIZED PROTON PUMP"/>
    <property type="match status" value="1"/>
</dbReference>
<dbReference type="Pfam" id="PF03030">
    <property type="entry name" value="H_PPase"/>
    <property type="match status" value="1"/>
</dbReference>
<dbReference type="PIRSF" id="PIRSF001265">
    <property type="entry name" value="H+-PPase"/>
    <property type="match status" value="1"/>
</dbReference>
<proteinExistence type="evidence at protein level"/>
<name>HPPA_RHORT</name>
<protein>
    <recommendedName>
        <fullName evidence="2">K(+)-insensitive pyrophosphate-energized proton pump</fullName>
        <ecNumber evidence="2">7.1.3.1</ecNumber>
    </recommendedName>
    <alternativeName>
        <fullName evidence="2">Membrane-bound proton-translocating pyrophosphatase</fullName>
    </alternativeName>
    <alternativeName>
        <fullName evidence="2">Pyrophosphate-energized inorganic pyrophosphatase</fullName>
        <shortName evidence="2">H(+)-PPase</shortName>
    </alternativeName>
</protein>